<sequence length="488" mass="54926">MLKVRFAPSPTGPLHIGGARSALFNYLLARKEDGVFIVRSEDTDLERSSRESEHNIMEALRWLNIQWDEGIEVGGDNGPYRQTERLALYQEYTDRLLASGDAYYCYCSEEELEQERQDLMAKGETPRYLGKCRHLSAAERQTYEAAGRKPVVRFRVPEGRQILINDRVRGEVVFDSDGIGDYVIVKSDGIPTYNFAVVIDDTTMNITHVIRGEEHLSNTPRQVLIYQALGLPTPEFAHISLILNTEGKKMSKRDGDTAVIDYQAKGYLPEAVVNFIALMGWSPPGEEEFFTLEEMTQAFSLERVSKSPAVFDLNKLNYMNAHYIKQADPERLTDLAVPYLREMGAIPQGTLSEEERAWVTHYVQAIINHLSYMAQVKDFVHYVQGGEAPTPEGEALEILQGEQVPAVLDLFVEKLKSLEAIRVDTVKPLFKQITKETKLGGKQVFMPIRIALTGQMHGPELYDIVPLLGLENVLSRLAGTKALLAGSR</sequence>
<proteinExistence type="inferred from homology"/>
<evidence type="ECO:0000255" key="1">
    <source>
        <dbReference type="HAMAP-Rule" id="MF_00022"/>
    </source>
</evidence>
<reference key="1">
    <citation type="journal article" date="2006" name="J. Bacteriol.">
        <title>Complete genome sequence of the dehalorespiring bacterium Desulfitobacterium hafniense Y51 and comparison with Dehalococcoides ethenogenes 195.</title>
        <authorList>
            <person name="Nonaka H."/>
            <person name="Keresztes G."/>
            <person name="Shinoda Y."/>
            <person name="Ikenaga Y."/>
            <person name="Abe M."/>
            <person name="Naito K."/>
            <person name="Inatomi K."/>
            <person name="Furukawa K."/>
            <person name="Inui M."/>
            <person name="Yukawa H."/>
        </authorList>
    </citation>
    <scope>NUCLEOTIDE SEQUENCE [LARGE SCALE GENOMIC DNA]</scope>
    <source>
        <strain>Y51</strain>
    </source>
</reference>
<protein>
    <recommendedName>
        <fullName evidence="1">Glutamate--tRNA ligase</fullName>
        <ecNumber evidence="1">6.1.1.17</ecNumber>
    </recommendedName>
    <alternativeName>
        <fullName evidence="1">Glutamyl-tRNA synthetase</fullName>
        <shortName evidence="1">GluRS</shortName>
    </alternativeName>
</protein>
<comment type="function">
    <text evidence="1">Catalyzes the attachment of glutamate to tRNA(Glu) in a two-step reaction: glutamate is first activated by ATP to form Glu-AMP and then transferred to the acceptor end of tRNA(Glu).</text>
</comment>
<comment type="catalytic activity">
    <reaction evidence="1">
        <text>tRNA(Glu) + L-glutamate + ATP = L-glutamyl-tRNA(Glu) + AMP + diphosphate</text>
        <dbReference type="Rhea" id="RHEA:23540"/>
        <dbReference type="Rhea" id="RHEA-COMP:9663"/>
        <dbReference type="Rhea" id="RHEA-COMP:9680"/>
        <dbReference type="ChEBI" id="CHEBI:29985"/>
        <dbReference type="ChEBI" id="CHEBI:30616"/>
        <dbReference type="ChEBI" id="CHEBI:33019"/>
        <dbReference type="ChEBI" id="CHEBI:78442"/>
        <dbReference type="ChEBI" id="CHEBI:78520"/>
        <dbReference type="ChEBI" id="CHEBI:456215"/>
        <dbReference type="EC" id="6.1.1.17"/>
    </reaction>
</comment>
<comment type="cofactor">
    <cofactor evidence="1">
        <name>Zn(2+)</name>
        <dbReference type="ChEBI" id="CHEBI:29105"/>
    </cofactor>
    <text evidence="1">Binds 1 zinc ion per subunit.</text>
</comment>
<comment type="subunit">
    <text evidence="1">Monomer.</text>
</comment>
<comment type="subcellular location">
    <subcellularLocation>
        <location evidence="1">Cytoplasm</location>
    </subcellularLocation>
</comment>
<comment type="similarity">
    <text evidence="1">Belongs to the class-I aminoacyl-tRNA synthetase family. Glutamate--tRNA ligase type 1 subfamily.</text>
</comment>
<dbReference type="EC" id="6.1.1.17" evidence="1"/>
<dbReference type="EMBL" id="AP008230">
    <property type="protein sequence ID" value="BAE82234.1"/>
    <property type="molecule type" value="Genomic_DNA"/>
</dbReference>
<dbReference type="RefSeq" id="WP_005810213.1">
    <property type="nucleotide sequence ID" value="NC_007907.1"/>
</dbReference>
<dbReference type="SMR" id="Q250Q8"/>
<dbReference type="STRING" id="138119.DSY0445"/>
<dbReference type="KEGG" id="dsy:DSY0445"/>
<dbReference type="eggNOG" id="COG0008">
    <property type="taxonomic scope" value="Bacteria"/>
</dbReference>
<dbReference type="HOGENOM" id="CLU_015768_6_3_9"/>
<dbReference type="Proteomes" id="UP000001946">
    <property type="component" value="Chromosome"/>
</dbReference>
<dbReference type="GO" id="GO:0005829">
    <property type="term" value="C:cytosol"/>
    <property type="evidence" value="ECO:0007669"/>
    <property type="project" value="TreeGrafter"/>
</dbReference>
<dbReference type="GO" id="GO:0005524">
    <property type="term" value="F:ATP binding"/>
    <property type="evidence" value="ECO:0007669"/>
    <property type="project" value="UniProtKB-UniRule"/>
</dbReference>
<dbReference type="GO" id="GO:0004818">
    <property type="term" value="F:glutamate-tRNA ligase activity"/>
    <property type="evidence" value="ECO:0007669"/>
    <property type="project" value="UniProtKB-UniRule"/>
</dbReference>
<dbReference type="GO" id="GO:0000049">
    <property type="term" value="F:tRNA binding"/>
    <property type="evidence" value="ECO:0007669"/>
    <property type="project" value="InterPro"/>
</dbReference>
<dbReference type="GO" id="GO:0008270">
    <property type="term" value="F:zinc ion binding"/>
    <property type="evidence" value="ECO:0007669"/>
    <property type="project" value="UniProtKB-UniRule"/>
</dbReference>
<dbReference type="GO" id="GO:0006424">
    <property type="term" value="P:glutamyl-tRNA aminoacylation"/>
    <property type="evidence" value="ECO:0007669"/>
    <property type="project" value="UniProtKB-UniRule"/>
</dbReference>
<dbReference type="CDD" id="cd00808">
    <property type="entry name" value="GluRS_core"/>
    <property type="match status" value="1"/>
</dbReference>
<dbReference type="FunFam" id="1.10.10.350:FF:000002">
    <property type="entry name" value="Glutamate--tRNA ligase"/>
    <property type="match status" value="1"/>
</dbReference>
<dbReference type="FunFam" id="3.40.50.620:FF:000007">
    <property type="entry name" value="Glutamate--tRNA ligase"/>
    <property type="match status" value="1"/>
</dbReference>
<dbReference type="Gene3D" id="1.10.10.350">
    <property type="match status" value="1"/>
</dbReference>
<dbReference type="Gene3D" id="3.40.50.620">
    <property type="entry name" value="HUPs"/>
    <property type="match status" value="1"/>
</dbReference>
<dbReference type="HAMAP" id="MF_00022">
    <property type="entry name" value="Glu_tRNA_synth_type1"/>
    <property type="match status" value="1"/>
</dbReference>
<dbReference type="InterPro" id="IPR045462">
    <property type="entry name" value="aa-tRNA-synth_I_cd-bd"/>
</dbReference>
<dbReference type="InterPro" id="IPR020751">
    <property type="entry name" value="aa-tRNA-synth_I_codon-bd_sub2"/>
</dbReference>
<dbReference type="InterPro" id="IPR001412">
    <property type="entry name" value="aa-tRNA-synth_I_CS"/>
</dbReference>
<dbReference type="InterPro" id="IPR008925">
    <property type="entry name" value="aa_tRNA-synth_I_cd-bd_sf"/>
</dbReference>
<dbReference type="InterPro" id="IPR004527">
    <property type="entry name" value="Glu-tRNA-ligase_bac/mito"/>
</dbReference>
<dbReference type="InterPro" id="IPR000924">
    <property type="entry name" value="Glu/Gln-tRNA-synth"/>
</dbReference>
<dbReference type="InterPro" id="IPR020058">
    <property type="entry name" value="Glu/Gln-tRNA-synth_Ib_cat-dom"/>
</dbReference>
<dbReference type="InterPro" id="IPR049940">
    <property type="entry name" value="GluQ/Sye"/>
</dbReference>
<dbReference type="InterPro" id="IPR033910">
    <property type="entry name" value="GluRS_core"/>
</dbReference>
<dbReference type="InterPro" id="IPR014729">
    <property type="entry name" value="Rossmann-like_a/b/a_fold"/>
</dbReference>
<dbReference type="NCBIfam" id="TIGR00464">
    <property type="entry name" value="gltX_bact"/>
    <property type="match status" value="1"/>
</dbReference>
<dbReference type="PANTHER" id="PTHR43311">
    <property type="entry name" value="GLUTAMATE--TRNA LIGASE"/>
    <property type="match status" value="1"/>
</dbReference>
<dbReference type="PANTHER" id="PTHR43311:SF2">
    <property type="entry name" value="GLUTAMATE--TRNA LIGASE, MITOCHONDRIAL-RELATED"/>
    <property type="match status" value="1"/>
</dbReference>
<dbReference type="Pfam" id="PF19269">
    <property type="entry name" value="Anticodon_2"/>
    <property type="match status" value="1"/>
</dbReference>
<dbReference type="Pfam" id="PF00749">
    <property type="entry name" value="tRNA-synt_1c"/>
    <property type="match status" value="1"/>
</dbReference>
<dbReference type="PRINTS" id="PR00987">
    <property type="entry name" value="TRNASYNTHGLU"/>
</dbReference>
<dbReference type="SUPFAM" id="SSF48163">
    <property type="entry name" value="An anticodon-binding domain of class I aminoacyl-tRNA synthetases"/>
    <property type="match status" value="1"/>
</dbReference>
<dbReference type="SUPFAM" id="SSF52374">
    <property type="entry name" value="Nucleotidylyl transferase"/>
    <property type="match status" value="1"/>
</dbReference>
<dbReference type="PROSITE" id="PS00178">
    <property type="entry name" value="AA_TRNA_LIGASE_I"/>
    <property type="match status" value="1"/>
</dbReference>
<gene>
    <name evidence="1" type="primary">gltX</name>
    <name type="ordered locus">DSY0445</name>
</gene>
<organism>
    <name type="scientific">Desulfitobacterium hafniense (strain Y51)</name>
    <dbReference type="NCBI Taxonomy" id="138119"/>
    <lineage>
        <taxon>Bacteria</taxon>
        <taxon>Bacillati</taxon>
        <taxon>Bacillota</taxon>
        <taxon>Clostridia</taxon>
        <taxon>Eubacteriales</taxon>
        <taxon>Desulfitobacteriaceae</taxon>
        <taxon>Desulfitobacterium</taxon>
    </lineage>
</organism>
<name>SYE_DESHY</name>
<accession>Q250Q8</accession>
<keyword id="KW-0030">Aminoacyl-tRNA synthetase</keyword>
<keyword id="KW-0067">ATP-binding</keyword>
<keyword id="KW-0963">Cytoplasm</keyword>
<keyword id="KW-0436">Ligase</keyword>
<keyword id="KW-0479">Metal-binding</keyword>
<keyword id="KW-0547">Nucleotide-binding</keyword>
<keyword id="KW-0648">Protein biosynthesis</keyword>
<keyword id="KW-1185">Reference proteome</keyword>
<keyword id="KW-0862">Zinc</keyword>
<feature type="chain" id="PRO_1000001893" description="Glutamate--tRNA ligase">
    <location>
        <begin position="1"/>
        <end position="488"/>
    </location>
</feature>
<feature type="short sequence motif" description="'HIGH' region" evidence="1">
    <location>
        <begin position="8"/>
        <end position="18"/>
    </location>
</feature>
<feature type="short sequence motif" description="'KMSKS' region" evidence="1">
    <location>
        <begin position="249"/>
        <end position="253"/>
    </location>
</feature>
<feature type="binding site" evidence="1">
    <location>
        <position position="105"/>
    </location>
    <ligand>
        <name>Zn(2+)</name>
        <dbReference type="ChEBI" id="CHEBI:29105"/>
    </ligand>
</feature>
<feature type="binding site" evidence="1">
    <location>
        <position position="107"/>
    </location>
    <ligand>
        <name>Zn(2+)</name>
        <dbReference type="ChEBI" id="CHEBI:29105"/>
    </ligand>
</feature>
<feature type="binding site" evidence="1">
    <location>
        <position position="132"/>
    </location>
    <ligand>
        <name>Zn(2+)</name>
        <dbReference type="ChEBI" id="CHEBI:29105"/>
    </ligand>
</feature>
<feature type="binding site" evidence="1">
    <location>
        <position position="134"/>
    </location>
    <ligand>
        <name>Zn(2+)</name>
        <dbReference type="ChEBI" id="CHEBI:29105"/>
    </ligand>
</feature>
<feature type="binding site" evidence="1">
    <location>
        <position position="252"/>
    </location>
    <ligand>
        <name>ATP</name>
        <dbReference type="ChEBI" id="CHEBI:30616"/>
    </ligand>
</feature>